<keyword id="KW-1185">Reference proteome</keyword>
<accession>Q92SN4</accession>
<proteinExistence type="inferred from homology"/>
<protein>
    <recommendedName>
        <fullName>UPF0102 protein R00337</fullName>
    </recommendedName>
</protein>
<comment type="similarity">
    <text evidence="1">Belongs to the UPF0102 family.</text>
</comment>
<dbReference type="EMBL" id="AL591688">
    <property type="protein sequence ID" value="CAC41774.1"/>
    <property type="molecule type" value="Genomic_DNA"/>
</dbReference>
<dbReference type="RefSeq" id="NP_384443.1">
    <property type="nucleotide sequence ID" value="NC_003047.1"/>
</dbReference>
<dbReference type="RefSeq" id="WP_003529772.1">
    <property type="nucleotide sequence ID" value="NC_003047.1"/>
</dbReference>
<dbReference type="SMR" id="Q92SN4"/>
<dbReference type="EnsemblBacteria" id="CAC41774">
    <property type="protein sequence ID" value="CAC41774"/>
    <property type="gene ID" value="SMc00418"/>
</dbReference>
<dbReference type="KEGG" id="sme:SMc00418"/>
<dbReference type="PATRIC" id="fig|266834.11.peg.1708"/>
<dbReference type="eggNOG" id="COG0792">
    <property type="taxonomic scope" value="Bacteria"/>
</dbReference>
<dbReference type="HOGENOM" id="CLU_115353_0_2_5"/>
<dbReference type="OrthoDB" id="9812968at2"/>
<dbReference type="Proteomes" id="UP000001976">
    <property type="component" value="Chromosome"/>
</dbReference>
<dbReference type="GO" id="GO:0003676">
    <property type="term" value="F:nucleic acid binding"/>
    <property type="evidence" value="ECO:0007669"/>
    <property type="project" value="InterPro"/>
</dbReference>
<dbReference type="Gene3D" id="3.40.1350.10">
    <property type="match status" value="1"/>
</dbReference>
<dbReference type="HAMAP" id="MF_00048">
    <property type="entry name" value="UPF0102"/>
    <property type="match status" value="1"/>
</dbReference>
<dbReference type="InterPro" id="IPR011335">
    <property type="entry name" value="Restrct_endonuc-II-like"/>
</dbReference>
<dbReference type="InterPro" id="IPR011856">
    <property type="entry name" value="tRNA_endonuc-like_dom_sf"/>
</dbReference>
<dbReference type="InterPro" id="IPR003509">
    <property type="entry name" value="UPF0102_YraN-like"/>
</dbReference>
<dbReference type="NCBIfam" id="NF009151">
    <property type="entry name" value="PRK12497.1-5"/>
    <property type="match status" value="1"/>
</dbReference>
<dbReference type="PANTHER" id="PTHR34039">
    <property type="entry name" value="UPF0102 PROTEIN YRAN"/>
    <property type="match status" value="1"/>
</dbReference>
<dbReference type="PANTHER" id="PTHR34039:SF1">
    <property type="entry name" value="UPF0102 PROTEIN YRAN"/>
    <property type="match status" value="1"/>
</dbReference>
<dbReference type="Pfam" id="PF02021">
    <property type="entry name" value="UPF0102"/>
    <property type="match status" value="1"/>
</dbReference>
<dbReference type="SUPFAM" id="SSF52980">
    <property type="entry name" value="Restriction endonuclease-like"/>
    <property type="match status" value="1"/>
</dbReference>
<gene>
    <name type="ordered locus">R00337</name>
    <name type="ORF">SMc00418</name>
</gene>
<reference key="1">
    <citation type="journal article" date="2001" name="Proc. Natl. Acad. Sci. U.S.A.">
        <title>Analysis of the chromosome sequence of the legume symbiont Sinorhizobium meliloti strain 1021.</title>
        <authorList>
            <person name="Capela D."/>
            <person name="Barloy-Hubler F."/>
            <person name="Gouzy J."/>
            <person name="Bothe G."/>
            <person name="Ampe F."/>
            <person name="Batut J."/>
            <person name="Boistard P."/>
            <person name="Becker A."/>
            <person name="Boutry M."/>
            <person name="Cadieu E."/>
            <person name="Dreano S."/>
            <person name="Gloux S."/>
            <person name="Godrie T."/>
            <person name="Goffeau A."/>
            <person name="Kahn D."/>
            <person name="Kiss E."/>
            <person name="Lelaure V."/>
            <person name="Masuy D."/>
            <person name="Pohl T."/>
            <person name="Portetelle D."/>
            <person name="Puehler A."/>
            <person name="Purnelle B."/>
            <person name="Ramsperger U."/>
            <person name="Renard C."/>
            <person name="Thebault P."/>
            <person name="Vandenbol M."/>
            <person name="Weidner S."/>
            <person name="Galibert F."/>
        </authorList>
    </citation>
    <scope>NUCLEOTIDE SEQUENCE [LARGE SCALE GENOMIC DNA]</scope>
    <source>
        <strain>1021</strain>
    </source>
</reference>
<reference key="2">
    <citation type="journal article" date="2001" name="Science">
        <title>The composite genome of the legume symbiont Sinorhizobium meliloti.</title>
        <authorList>
            <person name="Galibert F."/>
            <person name="Finan T.M."/>
            <person name="Long S.R."/>
            <person name="Puehler A."/>
            <person name="Abola P."/>
            <person name="Ampe F."/>
            <person name="Barloy-Hubler F."/>
            <person name="Barnett M.J."/>
            <person name="Becker A."/>
            <person name="Boistard P."/>
            <person name="Bothe G."/>
            <person name="Boutry M."/>
            <person name="Bowser L."/>
            <person name="Buhrmester J."/>
            <person name="Cadieu E."/>
            <person name="Capela D."/>
            <person name="Chain P."/>
            <person name="Cowie A."/>
            <person name="Davis R.W."/>
            <person name="Dreano S."/>
            <person name="Federspiel N.A."/>
            <person name="Fisher R.F."/>
            <person name="Gloux S."/>
            <person name="Godrie T."/>
            <person name="Goffeau A."/>
            <person name="Golding B."/>
            <person name="Gouzy J."/>
            <person name="Gurjal M."/>
            <person name="Hernandez-Lucas I."/>
            <person name="Hong A."/>
            <person name="Huizar L."/>
            <person name="Hyman R.W."/>
            <person name="Jones T."/>
            <person name="Kahn D."/>
            <person name="Kahn M.L."/>
            <person name="Kalman S."/>
            <person name="Keating D.H."/>
            <person name="Kiss E."/>
            <person name="Komp C."/>
            <person name="Lelaure V."/>
            <person name="Masuy D."/>
            <person name="Palm C."/>
            <person name="Peck M.C."/>
            <person name="Pohl T.M."/>
            <person name="Portetelle D."/>
            <person name="Purnelle B."/>
            <person name="Ramsperger U."/>
            <person name="Surzycki R."/>
            <person name="Thebault P."/>
            <person name="Vandenbol M."/>
            <person name="Vorhoelter F.J."/>
            <person name="Weidner S."/>
            <person name="Wells D.H."/>
            <person name="Wong K."/>
            <person name="Yeh K.-C."/>
            <person name="Batut J."/>
        </authorList>
    </citation>
    <scope>NUCLEOTIDE SEQUENCE [LARGE SCALE GENOMIC DNA]</scope>
    <source>
        <strain>1021</strain>
    </source>
</reference>
<name>Y337_RHIME</name>
<sequence>MKAERPDTRKLKALKRGHIAEYRAALCLMLKGYRIVAMRYRTRLGEIDIIARRGDLVACVEVKARVSLEDAVFAVTDTAQRRIRAASDLWLSRQGDFHRLSVRYDIVAVTPWRWPRHLPDAF</sequence>
<feature type="chain" id="PRO_0000167375" description="UPF0102 protein R00337">
    <location>
        <begin position="1"/>
        <end position="122"/>
    </location>
</feature>
<organism>
    <name type="scientific">Rhizobium meliloti (strain 1021)</name>
    <name type="common">Ensifer meliloti</name>
    <name type="synonym">Sinorhizobium meliloti</name>
    <dbReference type="NCBI Taxonomy" id="266834"/>
    <lineage>
        <taxon>Bacteria</taxon>
        <taxon>Pseudomonadati</taxon>
        <taxon>Pseudomonadota</taxon>
        <taxon>Alphaproteobacteria</taxon>
        <taxon>Hyphomicrobiales</taxon>
        <taxon>Rhizobiaceae</taxon>
        <taxon>Sinorhizobium/Ensifer group</taxon>
        <taxon>Sinorhizobium</taxon>
    </lineage>
</organism>
<evidence type="ECO:0000305" key="1"/>